<accession>Q8RA67</accession>
<reference key="1">
    <citation type="journal article" date="2002" name="Genome Res.">
        <title>A complete sequence of the T. tengcongensis genome.</title>
        <authorList>
            <person name="Bao Q."/>
            <person name="Tian Y."/>
            <person name="Li W."/>
            <person name="Xu Z."/>
            <person name="Xuan Z."/>
            <person name="Hu S."/>
            <person name="Dong W."/>
            <person name="Yang J."/>
            <person name="Chen Y."/>
            <person name="Xue Y."/>
            <person name="Xu Y."/>
            <person name="Lai X."/>
            <person name="Huang L."/>
            <person name="Dong X."/>
            <person name="Ma Y."/>
            <person name="Ling L."/>
            <person name="Tan H."/>
            <person name="Chen R."/>
            <person name="Wang J."/>
            <person name="Yu J."/>
            <person name="Yang H."/>
        </authorList>
    </citation>
    <scope>NUCLEOTIDE SEQUENCE [LARGE SCALE GENOMIC DNA]</scope>
    <source>
        <strain>DSM 15242 / JCM 11007 / NBRC 100824 / MB4</strain>
    </source>
</reference>
<name>RNH_CALS4</name>
<keyword id="KW-0963">Cytoplasm</keyword>
<keyword id="KW-0255">Endonuclease</keyword>
<keyword id="KW-0378">Hydrolase</keyword>
<keyword id="KW-0460">Magnesium</keyword>
<keyword id="KW-0479">Metal-binding</keyword>
<keyword id="KW-0540">Nuclease</keyword>
<keyword id="KW-1185">Reference proteome</keyword>
<feature type="chain" id="PRO_0000195411" description="Ribonuclease H">
    <location>
        <begin position="1"/>
        <end position="153"/>
    </location>
</feature>
<feature type="domain" description="RNase H type-1" evidence="2">
    <location>
        <begin position="4"/>
        <end position="146"/>
    </location>
</feature>
<feature type="binding site" evidence="1">
    <location>
        <position position="13"/>
    </location>
    <ligand>
        <name>Mg(2+)</name>
        <dbReference type="ChEBI" id="CHEBI:18420"/>
        <label>1</label>
    </ligand>
</feature>
<feature type="binding site" evidence="1">
    <location>
        <position position="13"/>
    </location>
    <ligand>
        <name>Mg(2+)</name>
        <dbReference type="ChEBI" id="CHEBI:18420"/>
        <label>2</label>
    </ligand>
</feature>
<feature type="binding site" evidence="1">
    <location>
        <position position="51"/>
    </location>
    <ligand>
        <name>Mg(2+)</name>
        <dbReference type="ChEBI" id="CHEBI:18420"/>
        <label>1</label>
    </ligand>
</feature>
<feature type="binding site" evidence="1">
    <location>
        <position position="73"/>
    </location>
    <ligand>
        <name>Mg(2+)</name>
        <dbReference type="ChEBI" id="CHEBI:18420"/>
        <label>1</label>
    </ligand>
</feature>
<feature type="binding site" evidence="1">
    <location>
        <position position="138"/>
    </location>
    <ligand>
        <name>Mg(2+)</name>
        <dbReference type="ChEBI" id="CHEBI:18420"/>
        <label>2</label>
    </ligand>
</feature>
<organism>
    <name type="scientific">Caldanaerobacter subterraneus subsp. tengcongensis (strain DSM 15242 / JCM 11007 / NBRC 100824 / MB4)</name>
    <name type="common">Thermoanaerobacter tengcongensis</name>
    <dbReference type="NCBI Taxonomy" id="273068"/>
    <lineage>
        <taxon>Bacteria</taxon>
        <taxon>Bacillati</taxon>
        <taxon>Bacillota</taxon>
        <taxon>Clostridia</taxon>
        <taxon>Thermoanaerobacterales</taxon>
        <taxon>Thermoanaerobacteraceae</taxon>
        <taxon>Caldanaerobacter</taxon>
    </lineage>
</organism>
<evidence type="ECO:0000255" key="1">
    <source>
        <dbReference type="HAMAP-Rule" id="MF_00042"/>
    </source>
</evidence>
<evidence type="ECO:0000255" key="2">
    <source>
        <dbReference type="PROSITE-ProRule" id="PRU00408"/>
    </source>
</evidence>
<comment type="function">
    <text evidence="1">Endonuclease that specifically degrades the RNA of RNA-DNA hybrids.</text>
</comment>
<comment type="catalytic activity">
    <reaction evidence="1">
        <text>Endonucleolytic cleavage to 5'-phosphomonoester.</text>
        <dbReference type="EC" id="3.1.26.4"/>
    </reaction>
</comment>
<comment type="cofactor">
    <cofactor evidence="1">
        <name>Mg(2+)</name>
        <dbReference type="ChEBI" id="CHEBI:18420"/>
    </cofactor>
    <text evidence="1">Binds 1 Mg(2+) ion per subunit. May bind a second metal ion at a regulatory site, or after substrate binding.</text>
</comment>
<comment type="subunit">
    <text evidence="1">Monomer.</text>
</comment>
<comment type="subcellular location">
    <subcellularLocation>
        <location evidence="1">Cytoplasm</location>
    </subcellularLocation>
</comment>
<comment type="similarity">
    <text evidence="1">Belongs to the RNase H family.</text>
</comment>
<protein>
    <recommendedName>
        <fullName evidence="1">Ribonuclease H</fullName>
        <shortName evidence="1">RNase H</shortName>
        <ecNumber evidence="1">3.1.26.4</ecNumber>
    </recommendedName>
</protein>
<sequence length="153" mass="17561">MKNNNEIVEIYTDGACSGNPGPGGWAAVLIYKGIKKEISGFEENTTNNRMELKAAIEGLKALKRPCKVNLYSDSSYLINAFNEGWIEKWQKNNWLKSDKTPVENQDLWKELLEVSKPHQINWIKVKGHSDNEYNNLCDRLATEQIKKHIKENP</sequence>
<gene>
    <name evidence="1" type="primary">rnhA</name>
    <name type="ordered locus">TTE1362</name>
</gene>
<proteinExistence type="inferred from homology"/>
<dbReference type="EC" id="3.1.26.4" evidence="1"/>
<dbReference type="EMBL" id="AE008691">
    <property type="protein sequence ID" value="AAM24584.1"/>
    <property type="molecule type" value="Genomic_DNA"/>
</dbReference>
<dbReference type="RefSeq" id="WP_011025656.1">
    <property type="nucleotide sequence ID" value="NZ_JANUCV010000001.1"/>
</dbReference>
<dbReference type="SMR" id="Q8RA67"/>
<dbReference type="STRING" id="273068.TTE1362"/>
<dbReference type="KEGG" id="tte:TTE1362"/>
<dbReference type="eggNOG" id="COG0328">
    <property type="taxonomic scope" value="Bacteria"/>
</dbReference>
<dbReference type="HOGENOM" id="CLU_030894_6_2_9"/>
<dbReference type="OrthoDB" id="7845843at2"/>
<dbReference type="Proteomes" id="UP000000555">
    <property type="component" value="Chromosome"/>
</dbReference>
<dbReference type="GO" id="GO:0005737">
    <property type="term" value="C:cytoplasm"/>
    <property type="evidence" value="ECO:0007669"/>
    <property type="project" value="UniProtKB-SubCell"/>
</dbReference>
<dbReference type="GO" id="GO:0000287">
    <property type="term" value="F:magnesium ion binding"/>
    <property type="evidence" value="ECO:0007669"/>
    <property type="project" value="UniProtKB-UniRule"/>
</dbReference>
<dbReference type="GO" id="GO:0003676">
    <property type="term" value="F:nucleic acid binding"/>
    <property type="evidence" value="ECO:0007669"/>
    <property type="project" value="InterPro"/>
</dbReference>
<dbReference type="GO" id="GO:0004523">
    <property type="term" value="F:RNA-DNA hybrid ribonuclease activity"/>
    <property type="evidence" value="ECO:0007669"/>
    <property type="project" value="UniProtKB-UniRule"/>
</dbReference>
<dbReference type="GO" id="GO:0043137">
    <property type="term" value="P:DNA replication, removal of RNA primer"/>
    <property type="evidence" value="ECO:0007669"/>
    <property type="project" value="TreeGrafter"/>
</dbReference>
<dbReference type="CDD" id="cd09278">
    <property type="entry name" value="RNase_HI_prokaryote_like"/>
    <property type="match status" value="1"/>
</dbReference>
<dbReference type="FunFam" id="3.30.420.10:FF:000089">
    <property type="entry name" value="Ribonuclease H"/>
    <property type="match status" value="1"/>
</dbReference>
<dbReference type="Gene3D" id="3.30.420.10">
    <property type="entry name" value="Ribonuclease H-like superfamily/Ribonuclease H"/>
    <property type="match status" value="1"/>
</dbReference>
<dbReference type="HAMAP" id="MF_00042">
    <property type="entry name" value="RNase_H"/>
    <property type="match status" value="1"/>
</dbReference>
<dbReference type="InterPro" id="IPR050092">
    <property type="entry name" value="RNase_H"/>
</dbReference>
<dbReference type="InterPro" id="IPR012337">
    <property type="entry name" value="RNaseH-like_sf"/>
</dbReference>
<dbReference type="InterPro" id="IPR002156">
    <property type="entry name" value="RNaseH_domain"/>
</dbReference>
<dbReference type="InterPro" id="IPR036397">
    <property type="entry name" value="RNaseH_sf"/>
</dbReference>
<dbReference type="InterPro" id="IPR022892">
    <property type="entry name" value="RNaseHI"/>
</dbReference>
<dbReference type="NCBIfam" id="NF001236">
    <property type="entry name" value="PRK00203.1"/>
    <property type="match status" value="1"/>
</dbReference>
<dbReference type="PANTHER" id="PTHR10642">
    <property type="entry name" value="RIBONUCLEASE H1"/>
    <property type="match status" value="1"/>
</dbReference>
<dbReference type="PANTHER" id="PTHR10642:SF26">
    <property type="entry name" value="RIBONUCLEASE H1"/>
    <property type="match status" value="1"/>
</dbReference>
<dbReference type="Pfam" id="PF00075">
    <property type="entry name" value="RNase_H"/>
    <property type="match status" value="1"/>
</dbReference>
<dbReference type="SUPFAM" id="SSF53098">
    <property type="entry name" value="Ribonuclease H-like"/>
    <property type="match status" value="1"/>
</dbReference>
<dbReference type="PROSITE" id="PS50879">
    <property type="entry name" value="RNASE_H_1"/>
    <property type="match status" value="1"/>
</dbReference>